<dbReference type="EC" id="2.5.1.75" evidence="1"/>
<dbReference type="EMBL" id="AE004439">
    <property type="protein sequence ID" value="AAK02989.1"/>
    <property type="status" value="ALT_INIT"/>
    <property type="molecule type" value="Genomic_DNA"/>
</dbReference>
<dbReference type="RefSeq" id="WP_005716970.1">
    <property type="nucleotide sequence ID" value="NC_002663.1"/>
</dbReference>
<dbReference type="SMR" id="Q9CMC7"/>
<dbReference type="STRING" id="272843.PM0905"/>
<dbReference type="EnsemblBacteria" id="AAK02989">
    <property type="protein sequence ID" value="AAK02989"/>
    <property type="gene ID" value="PM0905"/>
</dbReference>
<dbReference type="KEGG" id="pmu:PM0905"/>
<dbReference type="PATRIC" id="fig|272843.6.peg.915"/>
<dbReference type="HOGENOM" id="CLU_032616_0_0_6"/>
<dbReference type="OrthoDB" id="9776390at2"/>
<dbReference type="Proteomes" id="UP000000809">
    <property type="component" value="Chromosome"/>
</dbReference>
<dbReference type="GO" id="GO:0005524">
    <property type="term" value="F:ATP binding"/>
    <property type="evidence" value="ECO:0007669"/>
    <property type="project" value="UniProtKB-UniRule"/>
</dbReference>
<dbReference type="GO" id="GO:0052381">
    <property type="term" value="F:tRNA dimethylallyltransferase activity"/>
    <property type="evidence" value="ECO:0007669"/>
    <property type="project" value="UniProtKB-UniRule"/>
</dbReference>
<dbReference type="GO" id="GO:0006400">
    <property type="term" value="P:tRNA modification"/>
    <property type="evidence" value="ECO:0007669"/>
    <property type="project" value="TreeGrafter"/>
</dbReference>
<dbReference type="FunFam" id="1.10.20.140:FF:000001">
    <property type="entry name" value="tRNA dimethylallyltransferase"/>
    <property type="match status" value="1"/>
</dbReference>
<dbReference type="Gene3D" id="1.10.20.140">
    <property type="match status" value="1"/>
</dbReference>
<dbReference type="Gene3D" id="3.40.50.300">
    <property type="entry name" value="P-loop containing nucleotide triphosphate hydrolases"/>
    <property type="match status" value="1"/>
</dbReference>
<dbReference type="HAMAP" id="MF_00185">
    <property type="entry name" value="IPP_trans"/>
    <property type="match status" value="1"/>
</dbReference>
<dbReference type="InterPro" id="IPR039657">
    <property type="entry name" value="Dimethylallyltransferase"/>
</dbReference>
<dbReference type="InterPro" id="IPR018022">
    <property type="entry name" value="IPT"/>
</dbReference>
<dbReference type="InterPro" id="IPR027417">
    <property type="entry name" value="P-loop_NTPase"/>
</dbReference>
<dbReference type="NCBIfam" id="TIGR00174">
    <property type="entry name" value="miaA"/>
    <property type="match status" value="1"/>
</dbReference>
<dbReference type="PANTHER" id="PTHR11088">
    <property type="entry name" value="TRNA DIMETHYLALLYLTRANSFERASE"/>
    <property type="match status" value="1"/>
</dbReference>
<dbReference type="PANTHER" id="PTHR11088:SF60">
    <property type="entry name" value="TRNA DIMETHYLALLYLTRANSFERASE"/>
    <property type="match status" value="1"/>
</dbReference>
<dbReference type="Pfam" id="PF01715">
    <property type="entry name" value="IPPT"/>
    <property type="match status" value="1"/>
</dbReference>
<dbReference type="SUPFAM" id="SSF52540">
    <property type="entry name" value="P-loop containing nucleoside triphosphate hydrolases"/>
    <property type="match status" value="1"/>
</dbReference>
<gene>
    <name evidence="1" type="primary">miaA</name>
    <name type="synonym">trpX</name>
    <name type="ordered locus">PM0905</name>
</gene>
<accession>Q9CMC7</accession>
<evidence type="ECO:0000255" key="1">
    <source>
        <dbReference type="HAMAP-Rule" id="MF_00185"/>
    </source>
</evidence>
<evidence type="ECO:0000305" key="2"/>
<protein>
    <recommendedName>
        <fullName evidence="1">tRNA dimethylallyltransferase</fullName>
        <ecNumber evidence="1">2.5.1.75</ecNumber>
    </recommendedName>
    <alternativeName>
        <fullName evidence="1">Dimethylallyl diphosphate:tRNA dimethylallyltransferase</fullName>
        <shortName evidence="1">DMAPP:tRNA dimethylallyltransferase</shortName>
        <shortName evidence="1">DMATase</shortName>
    </alternativeName>
    <alternativeName>
        <fullName evidence="1">Isopentenyl-diphosphate:tRNA isopentenyltransferase</fullName>
        <shortName evidence="1">IPP transferase</shortName>
        <shortName evidence="1">IPPT</shortName>
        <shortName evidence="1">IPTase</shortName>
    </alternativeName>
</protein>
<sequence>MPLTTPTAIFLMGPTASGKTDLAIQLRQTLPVEVISVDSALIYRGMDIGTAKPSAEELALAPHRLIDICDPAESYSAANFRQDALREMADIIAAGKIPLLVGGTMLYYKALLEGLSPLPSADEKVRSEIEEKAQLQGWAALHQELAKIDPLAAQRINPNDSQRINRALEVFYLTGKSLSELSQQKGDSLPYQILQFAIAPKDRSILHDRIALRFQKMIEQGFQQEVEKLYQREDLHLDLPAMRCVGYRQMWEYLRGDYDHDEMIFRGICATRQLAKRQITWLRGWKYPIEWLDSLAIESAKQTIIHAVTKISHSNS</sequence>
<feature type="chain" id="PRO_0000163948" description="tRNA dimethylallyltransferase">
    <location>
        <begin position="1"/>
        <end position="316"/>
    </location>
</feature>
<feature type="region of interest" description="Interaction with substrate tRNA" evidence="1">
    <location>
        <begin position="38"/>
        <end position="41"/>
    </location>
</feature>
<feature type="region of interest" description="Interaction with substrate tRNA" evidence="1">
    <location>
        <begin position="162"/>
        <end position="166"/>
    </location>
</feature>
<feature type="region of interest" description="Interaction with substrate tRNA" evidence="1">
    <location>
        <begin position="243"/>
        <end position="248"/>
    </location>
</feature>
<feature type="region of interest" description="Interaction with substrate tRNA" evidence="1">
    <location>
        <begin position="276"/>
        <end position="283"/>
    </location>
</feature>
<feature type="binding site" evidence="1">
    <location>
        <begin position="13"/>
        <end position="20"/>
    </location>
    <ligand>
        <name>ATP</name>
        <dbReference type="ChEBI" id="CHEBI:30616"/>
    </ligand>
</feature>
<feature type="binding site" evidence="1">
    <location>
        <begin position="15"/>
        <end position="20"/>
    </location>
    <ligand>
        <name>substrate</name>
    </ligand>
</feature>
<feature type="site" description="Interaction with substrate tRNA" evidence="1">
    <location>
        <position position="104"/>
    </location>
</feature>
<feature type="site" description="Interaction with substrate tRNA" evidence="1">
    <location>
        <position position="126"/>
    </location>
</feature>
<organism>
    <name type="scientific">Pasteurella multocida (strain Pm70)</name>
    <dbReference type="NCBI Taxonomy" id="272843"/>
    <lineage>
        <taxon>Bacteria</taxon>
        <taxon>Pseudomonadati</taxon>
        <taxon>Pseudomonadota</taxon>
        <taxon>Gammaproteobacteria</taxon>
        <taxon>Pasteurellales</taxon>
        <taxon>Pasteurellaceae</taxon>
        <taxon>Pasteurella</taxon>
    </lineage>
</organism>
<comment type="function">
    <text evidence="1">Catalyzes the transfer of a dimethylallyl group onto the adenine at position 37 in tRNAs that read codons beginning with uridine, leading to the formation of N6-(dimethylallyl)adenosine (i(6)A).</text>
</comment>
<comment type="catalytic activity">
    <reaction evidence="1">
        <text>adenosine(37) in tRNA + dimethylallyl diphosphate = N(6)-dimethylallyladenosine(37) in tRNA + diphosphate</text>
        <dbReference type="Rhea" id="RHEA:26482"/>
        <dbReference type="Rhea" id="RHEA-COMP:10162"/>
        <dbReference type="Rhea" id="RHEA-COMP:10375"/>
        <dbReference type="ChEBI" id="CHEBI:33019"/>
        <dbReference type="ChEBI" id="CHEBI:57623"/>
        <dbReference type="ChEBI" id="CHEBI:74411"/>
        <dbReference type="ChEBI" id="CHEBI:74415"/>
        <dbReference type="EC" id="2.5.1.75"/>
    </reaction>
</comment>
<comment type="cofactor">
    <cofactor evidence="1">
        <name>Mg(2+)</name>
        <dbReference type="ChEBI" id="CHEBI:18420"/>
    </cofactor>
</comment>
<comment type="subunit">
    <text evidence="1">Monomer.</text>
</comment>
<comment type="similarity">
    <text evidence="1">Belongs to the IPP transferase family.</text>
</comment>
<comment type="sequence caution" evidence="2">
    <conflict type="erroneous initiation">
        <sequence resource="EMBL-CDS" id="AAK02989"/>
    </conflict>
</comment>
<keyword id="KW-0067">ATP-binding</keyword>
<keyword id="KW-0460">Magnesium</keyword>
<keyword id="KW-0547">Nucleotide-binding</keyword>
<keyword id="KW-1185">Reference proteome</keyword>
<keyword id="KW-0808">Transferase</keyword>
<keyword id="KW-0819">tRNA processing</keyword>
<reference key="1">
    <citation type="journal article" date="2001" name="Proc. Natl. Acad. Sci. U.S.A.">
        <title>Complete genomic sequence of Pasteurella multocida Pm70.</title>
        <authorList>
            <person name="May B.J."/>
            <person name="Zhang Q."/>
            <person name="Li L.L."/>
            <person name="Paustian M.L."/>
            <person name="Whittam T.S."/>
            <person name="Kapur V."/>
        </authorList>
    </citation>
    <scope>NUCLEOTIDE SEQUENCE [LARGE SCALE GENOMIC DNA]</scope>
    <source>
        <strain>Pm70</strain>
    </source>
</reference>
<name>MIAA_PASMU</name>
<proteinExistence type="inferred from homology"/>